<keyword id="KW-0963">Cytoplasm</keyword>
<keyword id="KW-0217">Developmental protein</keyword>
<keyword id="KW-0221">Differentiation</keyword>
<keyword id="KW-0539">Nucleus</keyword>
<keyword id="KW-1185">Reference proteome</keyword>
<keyword id="KW-0804">Transcription</keyword>
<keyword id="KW-0805">Transcription regulation</keyword>
<protein>
    <recommendedName>
        <fullName>Transcription initiation factor TFIID subunit 8</fullName>
    </recommendedName>
    <alternativeName>
        <fullName>TBP-associated factor 8</fullName>
    </alternativeName>
</protein>
<dbReference type="EMBL" id="CR760093">
    <property type="protein sequence ID" value="CAJ82344.1"/>
    <property type="molecule type" value="mRNA"/>
</dbReference>
<dbReference type="EMBL" id="BC135894">
    <property type="protein sequence ID" value="AAI35895.1"/>
    <property type="status" value="ALT_INIT"/>
    <property type="molecule type" value="mRNA"/>
</dbReference>
<dbReference type="RefSeq" id="NP_001016717.1">
    <property type="nucleotide sequence ID" value="NM_001016717.2"/>
</dbReference>
<dbReference type="RefSeq" id="XP_012818203.1">
    <property type="nucleotide sequence ID" value="XM_012962749.1"/>
</dbReference>
<dbReference type="SMR" id="Q28J24"/>
<dbReference type="FunCoup" id="Q28J24">
    <property type="interactions" value="4180"/>
</dbReference>
<dbReference type="STRING" id="8364.ENSXETP00000037305"/>
<dbReference type="PaxDb" id="8364-ENSXETP00000025890"/>
<dbReference type="GeneID" id="549471"/>
<dbReference type="KEGG" id="xtr:549471"/>
<dbReference type="AGR" id="Xenbase:XB-GENE-491356"/>
<dbReference type="CTD" id="129685"/>
<dbReference type="Xenbase" id="XB-GENE-491356">
    <property type="gene designation" value="taf8"/>
</dbReference>
<dbReference type="eggNOG" id="KOG4336">
    <property type="taxonomic scope" value="Eukaryota"/>
</dbReference>
<dbReference type="HOGENOM" id="CLU_070829_0_0_1"/>
<dbReference type="InParanoid" id="Q28J24"/>
<dbReference type="OMA" id="SAHNYCE"/>
<dbReference type="OrthoDB" id="2193813at2759"/>
<dbReference type="PhylomeDB" id="Q28J24"/>
<dbReference type="Reactome" id="R-XTR-6807505">
    <property type="pathway name" value="RNA polymerase II transcribes snRNA genes"/>
</dbReference>
<dbReference type="Proteomes" id="UP000008143">
    <property type="component" value="Chromosome 2"/>
</dbReference>
<dbReference type="Bgee" id="ENSXETG00000011845">
    <property type="expression patterns" value="Expressed in testis and 12 other cell types or tissues"/>
</dbReference>
<dbReference type="ExpressionAtlas" id="Q28J24">
    <property type="expression patterns" value="baseline and differential"/>
</dbReference>
<dbReference type="GO" id="GO:0005737">
    <property type="term" value="C:cytoplasm"/>
    <property type="evidence" value="ECO:0007669"/>
    <property type="project" value="UniProtKB-SubCell"/>
</dbReference>
<dbReference type="GO" id="GO:0005669">
    <property type="term" value="C:transcription factor TFIID complex"/>
    <property type="evidence" value="ECO:0000250"/>
    <property type="project" value="UniProtKB"/>
</dbReference>
<dbReference type="GO" id="GO:0046982">
    <property type="term" value="F:protein heterodimerization activity"/>
    <property type="evidence" value="ECO:0007669"/>
    <property type="project" value="InterPro"/>
</dbReference>
<dbReference type="GO" id="GO:0030154">
    <property type="term" value="P:cell differentiation"/>
    <property type="evidence" value="ECO:0007669"/>
    <property type="project" value="UniProtKB-KW"/>
</dbReference>
<dbReference type="CDD" id="cd22918">
    <property type="entry name" value="HFD_TAF8"/>
    <property type="match status" value="1"/>
</dbReference>
<dbReference type="CDD" id="cd08049">
    <property type="entry name" value="TAF8"/>
    <property type="match status" value="1"/>
</dbReference>
<dbReference type="FunFam" id="1.10.20.10:FF:000031">
    <property type="entry name" value="transcription initiation factor TFIID subunit 8 isoform X2"/>
    <property type="match status" value="1"/>
</dbReference>
<dbReference type="Gene3D" id="1.10.20.10">
    <property type="entry name" value="Histone, subunit A"/>
    <property type="match status" value="1"/>
</dbReference>
<dbReference type="InterPro" id="IPR006565">
    <property type="entry name" value="BTP"/>
</dbReference>
<dbReference type="InterPro" id="IPR009072">
    <property type="entry name" value="Histone-fold"/>
</dbReference>
<dbReference type="InterPro" id="IPR037818">
    <property type="entry name" value="TAF8"/>
</dbReference>
<dbReference type="InterPro" id="IPR019473">
    <property type="entry name" value="TFIID_su8_C"/>
</dbReference>
<dbReference type="PANTHER" id="PTHR46469">
    <property type="entry name" value="TRANSCRIPTION INITIATION FACTOR TFIID SUBUNIT 8"/>
    <property type="match status" value="1"/>
</dbReference>
<dbReference type="PANTHER" id="PTHR46469:SF1">
    <property type="entry name" value="TRANSCRIPTION INITIATION FACTOR TFIID SUBUNIT 8"/>
    <property type="match status" value="1"/>
</dbReference>
<dbReference type="Pfam" id="PF07524">
    <property type="entry name" value="Bromo_TP"/>
    <property type="match status" value="1"/>
</dbReference>
<dbReference type="Pfam" id="PF10406">
    <property type="entry name" value="TAF8_C"/>
    <property type="match status" value="1"/>
</dbReference>
<dbReference type="SMART" id="SM00576">
    <property type="entry name" value="BTP"/>
    <property type="match status" value="1"/>
</dbReference>
<dbReference type="SUPFAM" id="SSF47113">
    <property type="entry name" value="Histone-fold"/>
    <property type="match status" value="1"/>
</dbReference>
<accession>Q28J24</accession>
<accession>A4II75</accession>
<comment type="function">
    <text evidence="2">The TFIID basal transcription factor complex plays a major role in the initiation of RNA polymerase II (Pol II)-dependent transcription. TFIID recognizes and binds promoters with or without a TATA box via its subunit tbp, a TATA-box-binding protein, and promotes assembly of the pre-initiation complex (PIC). The TFIID complex consists of tbp and TBP-associated factors (TAFs). Mediates both basal and activator-dependent transcription.</text>
</comment>
<comment type="subunit">
    <text evidence="2">Component of the TFIID basal transcription factor complex, composed of TATA-box-binding protein tbp, and a number of TBP-associated factors (TAFs).</text>
</comment>
<comment type="subcellular location">
    <subcellularLocation>
        <location evidence="1">Nucleus</location>
    </subcellularLocation>
    <subcellularLocation>
        <location evidence="1">Cytoplasm</location>
    </subcellularLocation>
</comment>
<comment type="similarity">
    <text evidence="5">Belongs to the TAF8 family.</text>
</comment>
<comment type="sequence caution" evidence="5">
    <conflict type="erroneous initiation">
        <sequence resource="EMBL-CDS" id="AAI35895"/>
    </conflict>
</comment>
<reference key="1">
    <citation type="submission" date="2006-10" db="EMBL/GenBank/DDBJ databases">
        <authorList>
            <consortium name="Sanger Xenopus tropicalis EST/cDNA project"/>
        </authorList>
    </citation>
    <scope>NUCLEOTIDE SEQUENCE [LARGE SCALE MRNA]</scope>
    <source>
        <tissue>Neurula</tissue>
    </source>
</reference>
<proteinExistence type="evidence at transcript level"/>
<feature type="chain" id="PRO_0000315402" description="Transcription initiation factor TFIID subunit 8">
    <location>
        <begin position="1"/>
        <end position="293"/>
    </location>
</feature>
<feature type="domain" description="Histone-fold">
    <location>
        <begin position="25"/>
        <end position="92"/>
    </location>
</feature>
<feature type="region of interest" description="Disordered" evidence="4">
    <location>
        <begin position="226"/>
        <end position="293"/>
    </location>
</feature>
<feature type="short sequence motif" description="Nuclear localization signal" evidence="3">
    <location>
        <begin position="280"/>
        <end position="293"/>
    </location>
</feature>
<feature type="compositionally biased region" description="Acidic residues" evidence="4">
    <location>
        <begin position="226"/>
        <end position="240"/>
    </location>
</feature>
<feature type="compositionally biased region" description="Basic residues" evidence="4">
    <location>
        <begin position="283"/>
        <end position="293"/>
    </location>
</feature>
<gene>
    <name type="primary">taf8</name>
    <name type="ORF">TNeu125i04.1</name>
</gene>
<evidence type="ECO:0000250" key="1"/>
<evidence type="ECO:0000250" key="2">
    <source>
        <dbReference type="UniProtKB" id="Q7Z7C8"/>
    </source>
</evidence>
<evidence type="ECO:0000255" key="3"/>
<evidence type="ECO:0000256" key="4">
    <source>
        <dbReference type="SAM" id="MobiDB-lite"/>
    </source>
</evidence>
<evidence type="ECO:0000305" key="5"/>
<organism>
    <name type="scientific">Xenopus tropicalis</name>
    <name type="common">Western clawed frog</name>
    <name type="synonym">Silurana tropicalis</name>
    <dbReference type="NCBI Taxonomy" id="8364"/>
    <lineage>
        <taxon>Eukaryota</taxon>
        <taxon>Metazoa</taxon>
        <taxon>Chordata</taxon>
        <taxon>Craniata</taxon>
        <taxon>Vertebrata</taxon>
        <taxon>Euteleostomi</taxon>
        <taxon>Amphibia</taxon>
        <taxon>Batrachia</taxon>
        <taxon>Anura</taxon>
        <taxon>Pipoidea</taxon>
        <taxon>Pipidae</taxon>
        <taxon>Xenopodinae</taxon>
        <taxon>Xenopus</taxon>
        <taxon>Silurana</taxon>
    </lineage>
</organism>
<name>TAF8_XENTR</name>
<sequence>MFPTIRSCARGTSTPADNYMLARRRTLQVVVSSLLTEAGFESAEKAAVESLTEMLQSYLSEIGRSAKSYCEHTARTQPTLPDIVVTLIEMGFNVESLPAYAKRSQRMVITAPPVTNNPVVPKALSAGQNKQHPAHIPSHFPEFPDPHTYIKTPTYREPVCDYQVLREKAASQRRDVERALTRFMAKTGETQSLFKDDTSTFPLIAARPLSIPYLNALLPSELELQQVEETDSSEQDDQTDAENLSMHLQGDEVGMEKENSSVLQQNSMKGGEETLIDNPYLRPVKKPKLRRKK</sequence>